<proteinExistence type="inferred from homology"/>
<comment type="catalytic activity">
    <reaction evidence="1">
        <text>3'-dephospho-CoA + ATP = 2'-(5''-triphospho-alpha-D-ribosyl)-3'-dephospho-CoA + adenine</text>
        <dbReference type="Rhea" id="RHEA:15117"/>
        <dbReference type="ChEBI" id="CHEBI:16708"/>
        <dbReference type="ChEBI" id="CHEBI:30616"/>
        <dbReference type="ChEBI" id="CHEBI:57328"/>
        <dbReference type="ChEBI" id="CHEBI:61378"/>
        <dbReference type="EC" id="2.4.2.52"/>
    </reaction>
</comment>
<comment type="similarity">
    <text evidence="1">Belongs to the CitG/MdcB family.</text>
</comment>
<feature type="chain" id="PRO_0000255419" description="Probable 2-(5''-triphosphoribosyl)-3'-dephosphocoenzyme-A synthase">
    <location>
        <begin position="1"/>
        <end position="294"/>
    </location>
</feature>
<keyword id="KW-0067">ATP-binding</keyword>
<keyword id="KW-0547">Nucleotide-binding</keyword>
<keyword id="KW-0808">Transferase</keyword>
<organism>
    <name type="scientific">Streptococcus pyogenes serotype M28 (strain MGAS6180)</name>
    <dbReference type="NCBI Taxonomy" id="319701"/>
    <lineage>
        <taxon>Bacteria</taxon>
        <taxon>Bacillati</taxon>
        <taxon>Bacillota</taxon>
        <taxon>Bacilli</taxon>
        <taxon>Lactobacillales</taxon>
        <taxon>Streptococcaceae</taxon>
        <taxon>Streptococcus</taxon>
    </lineage>
</organism>
<accession>Q48TH6</accession>
<evidence type="ECO:0000255" key="1">
    <source>
        <dbReference type="HAMAP-Rule" id="MF_00397"/>
    </source>
</evidence>
<dbReference type="EC" id="2.4.2.52" evidence="1"/>
<dbReference type="EMBL" id="CP000056">
    <property type="protein sequence ID" value="AAX71984.1"/>
    <property type="molecule type" value="Genomic_DNA"/>
</dbReference>
<dbReference type="RefSeq" id="WP_011284803.1">
    <property type="nucleotide sequence ID" value="NC_007296.2"/>
</dbReference>
<dbReference type="GeneID" id="69900845"/>
<dbReference type="KEGG" id="spb:M28_Spy0871"/>
<dbReference type="HOGENOM" id="CLU_056179_1_0_9"/>
<dbReference type="GO" id="GO:0005524">
    <property type="term" value="F:ATP binding"/>
    <property type="evidence" value="ECO:0007669"/>
    <property type="project" value="UniProtKB-KW"/>
</dbReference>
<dbReference type="GO" id="GO:0046917">
    <property type="term" value="F:triphosphoribosyl-dephospho-CoA synthase activity"/>
    <property type="evidence" value="ECO:0007669"/>
    <property type="project" value="UniProtKB-UniRule"/>
</dbReference>
<dbReference type="GO" id="GO:0051191">
    <property type="term" value="P:prosthetic group biosynthetic process"/>
    <property type="evidence" value="ECO:0007669"/>
    <property type="project" value="TreeGrafter"/>
</dbReference>
<dbReference type="Gene3D" id="1.10.4200.10">
    <property type="entry name" value="Triphosphoribosyl-dephospho-CoA protein"/>
    <property type="match status" value="1"/>
</dbReference>
<dbReference type="HAMAP" id="MF_00397">
    <property type="entry name" value="CitG"/>
    <property type="match status" value="1"/>
</dbReference>
<dbReference type="InterPro" id="IPR002736">
    <property type="entry name" value="CitG"/>
</dbReference>
<dbReference type="InterPro" id="IPR017551">
    <property type="entry name" value="TriPribosyl-deP-CoA_syn_CitG"/>
</dbReference>
<dbReference type="NCBIfam" id="TIGR03125">
    <property type="entry name" value="citrate_citG"/>
    <property type="match status" value="1"/>
</dbReference>
<dbReference type="PANTHER" id="PTHR30201:SF2">
    <property type="entry name" value="2-(5''-TRIPHOSPHORIBOSYL)-3'-DEPHOSPHOCOENZYME-A SYNTHASE"/>
    <property type="match status" value="1"/>
</dbReference>
<dbReference type="PANTHER" id="PTHR30201">
    <property type="entry name" value="TRIPHOSPHORIBOSYL-DEPHOSPHO-COA SYNTHASE"/>
    <property type="match status" value="1"/>
</dbReference>
<dbReference type="Pfam" id="PF01874">
    <property type="entry name" value="CitG"/>
    <property type="match status" value="1"/>
</dbReference>
<sequence>MTKAVLTSISQLALKALLYEVSLSPKPGLVDRFDNGAHDDMSFMTFIDSMIALSPFFQAYIETGFAYAKEEPLLLFNRLRQLGQKAEETMFCATQGINTHKGLNFSMALLLGATGAYLARTPHLMTDLGCFSKEDTLAICRLVKPMTAHLIQTDLGHLNTKKEFTYGEQLFVTYGIKGPRGEASEGFTTLTDHALPYFRQMISQNDPETSQLRLLVYLMSIVEDGNLIHRGGIEAWKGVKADMRLLLQQDLSTTDLRLALSSYNQCLINQHLSPGGAADLLALTFYFAFLEKLL</sequence>
<reference key="1">
    <citation type="journal article" date="2005" name="J. Infect. Dis.">
        <title>Genome sequence of a serotype M28 strain of group A Streptococcus: potential new insights into puerperal sepsis and bacterial disease specificity.</title>
        <authorList>
            <person name="Green N.M."/>
            <person name="Zhang S."/>
            <person name="Porcella S.F."/>
            <person name="Nagiec M.J."/>
            <person name="Barbian K.D."/>
            <person name="Beres S.B."/>
            <person name="Lefebvre R.B."/>
            <person name="Musser J.M."/>
        </authorList>
    </citation>
    <scope>NUCLEOTIDE SEQUENCE [LARGE SCALE GENOMIC DNA]</scope>
    <source>
        <strain>MGAS6180</strain>
    </source>
</reference>
<protein>
    <recommendedName>
        <fullName evidence="1">Probable 2-(5''-triphosphoribosyl)-3'-dephosphocoenzyme-A synthase</fullName>
        <shortName evidence="1">2-(5''-triphosphoribosyl)-3'-dephospho-CoA synthase</shortName>
        <ecNumber evidence="1">2.4.2.52</ecNumber>
    </recommendedName>
</protein>
<name>CITG_STRPM</name>
<gene>
    <name evidence="1" type="primary">citG</name>
    <name type="ordered locus">M28_Spy0871</name>
</gene>